<gene>
    <name type="primary">CCR5</name>
    <name type="synonym">CMKBR5</name>
</gene>
<reference key="1">
    <citation type="journal article" date="1999" name="AIDS Res. Hum. Retroviruses">
        <title>Mutations in CCR5-coding sequences are not associated with SIV carrier status in African nonhuman primates.</title>
        <authorList>
            <person name="Mueller-Trutwin M.-C."/>
            <person name="Corbet S."/>
            <person name="Hansen J."/>
            <person name="Georges-Courbot M.-C."/>
            <person name="Diop O."/>
            <person name="Rigoulet J."/>
            <person name="Barre-Sinoussi F."/>
            <person name="Fomsgaard A."/>
        </authorList>
    </citation>
    <scope>NUCLEOTIDE SEQUENCE [GENOMIC DNA]</scope>
</reference>
<sequence length="352" mass="40650">MDYQVSSPTYDIDYYTSEPCQKINVKQIAARLLPPLYSLVFIFGFVGNILVVLILINCKRLKSMTDIYLLNLAISDLLFLLTVPFWAHYAAAQWDFGNTMCQLLTGLYFIGFFSGIFFIILLTIDRYLAIVHAVFALKARTVTFGVVTSVITWVVAVFASLPRIIFTTSHRERLHYTCSSHFPYSQYQFWKNFHTLKIVILGLVLPLLVMVICYSGILKTLLRCRNEKKRHRAVRLIFTIMIVYFLFWAPYNIVLLLNTFQEFFGLNNCSSSNRLDQAMQVTETLGMTHCCINPIIYAFVGEKFRNYLLVFFQKHIAKRFCKCCSIFQQEAPERASSVYTRSTGEQEISVGL</sequence>
<comment type="function">
    <text evidence="1">Receptor for a number of inflammatory CC-chemokines including CCL3/MIP-1-alpha, CCL4/MIP-1-beta and RANTES and subsequently transduces a signal by increasing the intracellular calcium ion level. May play a role in the control of granulocytic lineage proliferation or differentiation. Participates in T-lymphocyte migration to the infection site by acting as a chemotactic receptor.</text>
</comment>
<comment type="subunit">
    <text evidence="1">Interacts with PRAF2. Efficient ligand binding to CCL3/MIP-1alpha and CCL4/MIP-1beta requires sulfation, O-glycosylation and sialic acid modifications. Glycosylation on Ser-6 is required for efficient binding of CCL4. Interacts with GRK2. Interacts with ARRB1 and ARRB2. Interacts with CNIH4. Interacts with S100A4; this interaction stimulates T-lymphocyte chemotaxis.</text>
</comment>
<comment type="subcellular location">
    <subcellularLocation>
        <location evidence="2">Cell membrane</location>
        <topology evidence="2">Multi-pass membrane protein</topology>
    </subcellularLocation>
</comment>
<comment type="PTM">
    <text evidence="1">Sulfated on at least 2 of the N-terminal tyrosines. Sulfation is required for efficient binding of the chemokines, CCL3 and CCL4 (By similarity).</text>
</comment>
<comment type="PTM">
    <text evidence="1">Palmitoylation in the C-terminal is important for cell surface expression.</text>
</comment>
<comment type="PTM">
    <text evidence="1">Phosphorylation on serine residues in the C-terminal is stimulated by binding CC chemokines especially by APO-RANTES.</text>
</comment>
<comment type="PTM">
    <text evidence="1">O-glycosylated, but not N-glycosylated. Ser-6 appears to be the major site even if Ser-7 may be also O-glycosylated. Also sialylated glycans present which contribute to chemokine binding. Thr-16 and Ser-17 may also be glycosylated and, if so, with small moieties such as a T-antigen.</text>
</comment>
<comment type="similarity">
    <text evidence="4">Belongs to the G-protein coupled receptor 1 family.</text>
</comment>
<evidence type="ECO:0000250" key="1">
    <source>
        <dbReference type="UniProtKB" id="P51681"/>
    </source>
</evidence>
<evidence type="ECO:0000250" key="2">
    <source>
        <dbReference type="UniProtKB" id="Q9XT76"/>
    </source>
</evidence>
<evidence type="ECO:0000255" key="3"/>
<evidence type="ECO:0000255" key="4">
    <source>
        <dbReference type="PROSITE-ProRule" id="PRU00521"/>
    </source>
</evidence>
<dbReference type="EMBL" id="AF035216">
    <property type="protein sequence ID" value="AAD44009.1"/>
    <property type="molecule type" value="Genomic_DNA"/>
</dbReference>
<dbReference type="SMR" id="Q9TV48"/>
<dbReference type="GlyCosmos" id="Q9TV48">
    <property type="glycosylation" value="2 sites, No reported glycans"/>
</dbReference>
<dbReference type="GO" id="GO:0005737">
    <property type="term" value="C:cytoplasm"/>
    <property type="evidence" value="ECO:0007669"/>
    <property type="project" value="TreeGrafter"/>
</dbReference>
<dbReference type="GO" id="GO:0009897">
    <property type="term" value="C:external side of plasma membrane"/>
    <property type="evidence" value="ECO:0000250"/>
    <property type="project" value="UniProtKB"/>
</dbReference>
<dbReference type="GO" id="GO:0016493">
    <property type="term" value="F:C-C chemokine receptor activity"/>
    <property type="evidence" value="ECO:0000250"/>
    <property type="project" value="UniProtKB"/>
</dbReference>
<dbReference type="GO" id="GO:0071791">
    <property type="term" value="F:chemokine (C-C motif) ligand 5 binding"/>
    <property type="evidence" value="ECO:0007669"/>
    <property type="project" value="TreeGrafter"/>
</dbReference>
<dbReference type="GO" id="GO:0019722">
    <property type="term" value="P:calcium-mediated signaling"/>
    <property type="evidence" value="ECO:0007669"/>
    <property type="project" value="TreeGrafter"/>
</dbReference>
<dbReference type="GO" id="GO:0060326">
    <property type="term" value="P:cell chemotaxis"/>
    <property type="evidence" value="ECO:0007669"/>
    <property type="project" value="TreeGrafter"/>
</dbReference>
<dbReference type="GO" id="GO:0006955">
    <property type="term" value="P:immune response"/>
    <property type="evidence" value="ECO:0007669"/>
    <property type="project" value="InterPro"/>
</dbReference>
<dbReference type="GO" id="GO:0006954">
    <property type="term" value="P:inflammatory response"/>
    <property type="evidence" value="ECO:0007669"/>
    <property type="project" value="InterPro"/>
</dbReference>
<dbReference type="GO" id="GO:0007204">
    <property type="term" value="P:positive regulation of cytosolic calcium ion concentration"/>
    <property type="evidence" value="ECO:0007669"/>
    <property type="project" value="TreeGrafter"/>
</dbReference>
<dbReference type="CDD" id="cd15184">
    <property type="entry name" value="7tmA_CCR5_CCR2"/>
    <property type="match status" value="1"/>
</dbReference>
<dbReference type="FunFam" id="1.20.1070.10:FF:000026">
    <property type="entry name" value="C-C chemokine receptor type 5"/>
    <property type="match status" value="1"/>
</dbReference>
<dbReference type="Gene3D" id="1.20.1070.10">
    <property type="entry name" value="Rhodopsin 7-helix transmembrane proteins"/>
    <property type="match status" value="1"/>
</dbReference>
<dbReference type="InterPro" id="IPR050119">
    <property type="entry name" value="CCR1-9-like"/>
</dbReference>
<dbReference type="InterPro" id="IPR002240">
    <property type="entry name" value="Chemokine_CCR5"/>
</dbReference>
<dbReference type="InterPro" id="IPR000355">
    <property type="entry name" value="Chemokine_rcpt"/>
</dbReference>
<dbReference type="InterPro" id="IPR000276">
    <property type="entry name" value="GPCR_Rhodpsn"/>
</dbReference>
<dbReference type="InterPro" id="IPR017452">
    <property type="entry name" value="GPCR_Rhodpsn_7TM"/>
</dbReference>
<dbReference type="PANTHER" id="PTHR10489:SF686">
    <property type="entry name" value="C-C CHEMOKINE RECEPTOR TYPE 5"/>
    <property type="match status" value="1"/>
</dbReference>
<dbReference type="PANTHER" id="PTHR10489">
    <property type="entry name" value="CELL ADHESION MOLECULE"/>
    <property type="match status" value="1"/>
</dbReference>
<dbReference type="Pfam" id="PF00001">
    <property type="entry name" value="7tm_1"/>
    <property type="match status" value="1"/>
</dbReference>
<dbReference type="PRINTS" id="PR00657">
    <property type="entry name" value="CCCHEMOKINER"/>
</dbReference>
<dbReference type="PRINTS" id="PR01110">
    <property type="entry name" value="CHEMOKINER5"/>
</dbReference>
<dbReference type="PRINTS" id="PR00237">
    <property type="entry name" value="GPCRRHODOPSN"/>
</dbReference>
<dbReference type="SUPFAM" id="SSF81321">
    <property type="entry name" value="Family A G protein-coupled receptor-like"/>
    <property type="match status" value="1"/>
</dbReference>
<dbReference type="PROSITE" id="PS00237">
    <property type="entry name" value="G_PROTEIN_RECEP_F1_1"/>
    <property type="match status" value="1"/>
</dbReference>
<dbReference type="PROSITE" id="PS50262">
    <property type="entry name" value="G_PROTEIN_RECEP_F1_2"/>
    <property type="match status" value="1"/>
</dbReference>
<feature type="chain" id="PRO_0000256647" description="C-C chemokine receptor type 5">
    <location>
        <begin position="1"/>
        <end position="352"/>
    </location>
</feature>
<feature type="topological domain" description="Extracellular" evidence="3">
    <location>
        <begin position="1"/>
        <end position="30"/>
    </location>
</feature>
<feature type="transmembrane region" description="Helical; Name=1" evidence="3">
    <location>
        <begin position="31"/>
        <end position="58"/>
    </location>
</feature>
<feature type="topological domain" description="Cytoplasmic" evidence="3">
    <location>
        <begin position="59"/>
        <end position="68"/>
    </location>
</feature>
<feature type="transmembrane region" description="Helical; Name=2" evidence="3">
    <location>
        <begin position="69"/>
        <end position="89"/>
    </location>
</feature>
<feature type="topological domain" description="Extracellular" evidence="3">
    <location>
        <begin position="90"/>
        <end position="102"/>
    </location>
</feature>
<feature type="transmembrane region" description="Helical; Name=3" evidence="3">
    <location>
        <begin position="103"/>
        <end position="124"/>
    </location>
</feature>
<feature type="topological domain" description="Cytoplasmic" evidence="3">
    <location>
        <begin position="125"/>
        <end position="141"/>
    </location>
</feature>
<feature type="transmembrane region" description="Helical; Name=4" evidence="3">
    <location>
        <begin position="142"/>
        <end position="166"/>
    </location>
</feature>
<feature type="topological domain" description="Extracellular" evidence="3">
    <location>
        <begin position="167"/>
        <end position="198"/>
    </location>
</feature>
<feature type="transmembrane region" description="Helical; Name=5" evidence="3">
    <location>
        <begin position="199"/>
        <end position="218"/>
    </location>
</feature>
<feature type="topological domain" description="Cytoplasmic" evidence="3">
    <location>
        <begin position="219"/>
        <end position="235"/>
    </location>
</feature>
<feature type="transmembrane region" description="Helical; Name=6" evidence="3">
    <location>
        <begin position="236"/>
        <end position="260"/>
    </location>
</feature>
<feature type="topological domain" description="Extracellular" evidence="3">
    <location>
        <begin position="261"/>
        <end position="277"/>
    </location>
</feature>
<feature type="transmembrane region" description="Helical; Name=7" evidence="3">
    <location>
        <begin position="278"/>
        <end position="301"/>
    </location>
</feature>
<feature type="topological domain" description="Cytoplasmic" evidence="3">
    <location>
        <begin position="302"/>
        <end position="352"/>
    </location>
</feature>
<feature type="modified residue" description="Sulfotyrosine" evidence="1">
    <location>
        <position position="3"/>
    </location>
</feature>
<feature type="modified residue" description="Sulfotyrosine" evidence="3">
    <location>
        <position position="10"/>
    </location>
</feature>
<feature type="modified residue" description="Sulfotyrosine" evidence="3">
    <location>
        <position position="14"/>
    </location>
</feature>
<feature type="modified residue" description="Sulfotyrosine" evidence="3">
    <location>
        <position position="15"/>
    </location>
</feature>
<feature type="modified residue" description="Phosphoserine; by BARK1" evidence="1">
    <location>
        <position position="336"/>
    </location>
</feature>
<feature type="modified residue" description="Phosphoserine; by BARK1" evidence="1">
    <location>
        <position position="337"/>
    </location>
</feature>
<feature type="modified residue" description="Phosphoserine; by BARK1" evidence="1">
    <location>
        <position position="342"/>
    </location>
</feature>
<feature type="modified residue" description="Phosphoserine; by BARK1" evidence="1">
    <location>
        <position position="349"/>
    </location>
</feature>
<feature type="lipid moiety-binding region" description="S-palmitoyl cysteine" evidence="1">
    <location>
        <position position="321"/>
    </location>
</feature>
<feature type="lipid moiety-binding region" description="S-palmitoyl cysteine" evidence="1">
    <location>
        <position position="323"/>
    </location>
</feature>
<feature type="lipid moiety-binding region" description="S-palmitoyl cysteine" evidence="1">
    <location>
        <position position="324"/>
    </location>
</feature>
<feature type="glycosylation site" description="O-linked (GalNAc...) serine" evidence="1">
    <location>
        <position position="6"/>
    </location>
</feature>
<feature type="glycosylation site" description="O-linked (GalNAc...) serine" evidence="1">
    <location>
        <position position="7"/>
    </location>
</feature>
<feature type="disulfide bond" evidence="1">
    <location>
        <begin position="20"/>
        <end position="269"/>
    </location>
</feature>
<feature type="disulfide bond" evidence="4">
    <location>
        <begin position="101"/>
        <end position="178"/>
    </location>
</feature>
<protein>
    <recommendedName>
        <fullName>C-C chemokine receptor type 5</fullName>
        <shortName>C-C CKR-5</shortName>
        <shortName>CC-CKR-5</shortName>
        <shortName>CCR-5</shortName>
        <shortName>CCR5</shortName>
    </recommendedName>
    <cdAntigenName>CD195</cdAntigenName>
</protein>
<proteinExistence type="inferred from homology"/>
<keyword id="KW-1003">Cell membrane</keyword>
<keyword id="KW-1015">Disulfide bond</keyword>
<keyword id="KW-0297">G-protein coupled receptor</keyword>
<keyword id="KW-0325">Glycoprotein</keyword>
<keyword id="KW-0449">Lipoprotein</keyword>
<keyword id="KW-0472">Membrane</keyword>
<keyword id="KW-0564">Palmitate</keyword>
<keyword id="KW-0597">Phosphoprotein</keyword>
<keyword id="KW-0675">Receptor</keyword>
<keyword id="KW-0765">Sulfation</keyword>
<keyword id="KW-0807">Transducer</keyword>
<keyword id="KW-0812">Transmembrane</keyword>
<keyword id="KW-1133">Transmembrane helix</keyword>
<accession>Q9TV48</accession>
<organism>
    <name type="scientific">Cercopithecus ascanius</name>
    <name type="common">Black-cheeked white-nosed monkey</name>
    <name type="synonym">Redtail monkey</name>
    <dbReference type="NCBI Taxonomy" id="36223"/>
    <lineage>
        <taxon>Eukaryota</taxon>
        <taxon>Metazoa</taxon>
        <taxon>Chordata</taxon>
        <taxon>Craniata</taxon>
        <taxon>Vertebrata</taxon>
        <taxon>Euteleostomi</taxon>
        <taxon>Mammalia</taxon>
        <taxon>Eutheria</taxon>
        <taxon>Euarchontoglires</taxon>
        <taxon>Primates</taxon>
        <taxon>Haplorrhini</taxon>
        <taxon>Catarrhini</taxon>
        <taxon>Cercopithecidae</taxon>
        <taxon>Cercopithecinae</taxon>
        <taxon>Cercopithecus</taxon>
    </lineage>
</organism>
<name>CCR5_CERAS</name>